<comment type="subunit">
    <text evidence="1">Interacts with YIPF6; this interaction may stabilize YIPF1. May also form a ternary complex with YIPF2 and YIPF6.</text>
</comment>
<comment type="subcellular location">
    <subcellularLocation>
        <location evidence="1">Golgi apparatus</location>
        <location evidence="1">cis-Golgi network membrane</location>
        <topology evidence="1">Multi-pass membrane protein</topology>
    </subcellularLocation>
    <subcellularLocation>
        <location evidence="1">Golgi apparatus</location>
        <location evidence="1">trans-Golgi network membrane</location>
    </subcellularLocation>
    <subcellularLocation>
        <location evidence="1">Late endosome membrane</location>
    </subcellularLocation>
    <text evidence="1">Mainly localizes within medial-/trans-Golgi and trans-Golgi network (TGN), while less so within cis-Golgi.</text>
</comment>
<comment type="similarity">
    <text evidence="4">Belongs to the YIP1 family.</text>
</comment>
<name>YIPF1_MOUSE</name>
<gene>
    <name type="primary">Yipf1</name>
</gene>
<reference key="1">
    <citation type="journal article" date="2005" name="Science">
        <title>The transcriptional landscape of the mammalian genome.</title>
        <authorList>
            <person name="Carninci P."/>
            <person name="Kasukawa T."/>
            <person name="Katayama S."/>
            <person name="Gough J."/>
            <person name="Frith M.C."/>
            <person name="Maeda N."/>
            <person name="Oyama R."/>
            <person name="Ravasi T."/>
            <person name="Lenhard B."/>
            <person name="Wells C."/>
            <person name="Kodzius R."/>
            <person name="Shimokawa K."/>
            <person name="Bajic V.B."/>
            <person name="Brenner S.E."/>
            <person name="Batalov S."/>
            <person name="Forrest A.R."/>
            <person name="Zavolan M."/>
            <person name="Davis M.J."/>
            <person name="Wilming L.G."/>
            <person name="Aidinis V."/>
            <person name="Allen J.E."/>
            <person name="Ambesi-Impiombato A."/>
            <person name="Apweiler R."/>
            <person name="Aturaliya R.N."/>
            <person name="Bailey T.L."/>
            <person name="Bansal M."/>
            <person name="Baxter L."/>
            <person name="Beisel K.W."/>
            <person name="Bersano T."/>
            <person name="Bono H."/>
            <person name="Chalk A.M."/>
            <person name="Chiu K.P."/>
            <person name="Choudhary V."/>
            <person name="Christoffels A."/>
            <person name="Clutterbuck D.R."/>
            <person name="Crowe M.L."/>
            <person name="Dalla E."/>
            <person name="Dalrymple B.P."/>
            <person name="de Bono B."/>
            <person name="Della Gatta G."/>
            <person name="di Bernardo D."/>
            <person name="Down T."/>
            <person name="Engstrom P."/>
            <person name="Fagiolini M."/>
            <person name="Faulkner G."/>
            <person name="Fletcher C.F."/>
            <person name="Fukushima T."/>
            <person name="Furuno M."/>
            <person name="Futaki S."/>
            <person name="Gariboldi M."/>
            <person name="Georgii-Hemming P."/>
            <person name="Gingeras T.R."/>
            <person name="Gojobori T."/>
            <person name="Green R.E."/>
            <person name="Gustincich S."/>
            <person name="Harbers M."/>
            <person name="Hayashi Y."/>
            <person name="Hensch T.K."/>
            <person name="Hirokawa N."/>
            <person name="Hill D."/>
            <person name="Huminiecki L."/>
            <person name="Iacono M."/>
            <person name="Ikeo K."/>
            <person name="Iwama A."/>
            <person name="Ishikawa T."/>
            <person name="Jakt M."/>
            <person name="Kanapin A."/>
            <person name="Katoh M."/>
            <person name="Kawasawa Y."/>
            <person name="Kelso J."/>
            <person name="Kitamura H."/>
            <person name="Kitano H."/>
            <person name="Kollias G."/>
            <person name="Krishnan S.P."/>
            <person name="Kruger A."/>
            <person name="Kummerfeld S.K."/>
            <person name="Kurochkin I.V."/>
            <person name="Lareau L.F."/>
            <person name="Lazarevic D."/>
            <person name="Lipovich L."/>
            <person name="Liu J."/>
            <person name="Liuni S."/>
            <person name="McWilliam S."/>
            <person name="Madan Babu M."/>
            <person name="Madera M."/>
            <person name="Marchionni L."/>
            <person name="Matsuda H."/>
            <person name="Matsuzawa S."/>
            <person name="Miki H."/>
            <person name="Mignone F."/>
            <person name="Miyake S."/>
            <person name="Morris K."/>
            <person name="Mottagui-Tabar S."/>
            <person name="Mulder N."/>
            <person name="Nakano N."/>
            <person name="Nakauchi H."/>
            <person name="Ng P."/>
            <person name="Nilsson R."/>
            <person name="Nishiguchi S."/>
            <person name="Nishikawa S."/>
            <person name="Nori F."/>
            <person name="Ohara O."/>
            <person name="Okazaki Y."/>
            <person name="Orlando V."/>
            <person name="Pang K.C."/>
            <person name="Pavan W.J."/>
            <person name="Pavesi G."/>
            <person name="Pesole G."/>
            <person name="Petrovsky N."/>
            <person name="Piazza S."/>
            <person name="Reed J."/>
            <person name="Reid J.F."/>
            <person name="Ring B.Z."/>
            <person name="Ringwald M."/>
            <person name="Rost B."/>
            <person name="Ruan Y."/>
            <person name="Salzberg S.L."/>
            <person name="Sandelin A."/>
            <person name="Schneider C."/>
            <person name="Schoenbach C."/>
            <person name="Sekiguchi K."/>
            <person name="Semple C.A."/>
            <person name="Seno S."/>
            <person name="Sessa L."/>
            <person name="Sheng Y."/>
            <person name="Shibata Y."/>
            <person name="Shimada H."/>
            <person name="Shimada K."/>
            <person name="Silva D."/>
            <person name="Sinclair B."/>
            <person name="Sperling S."/>
            <person name="Stupka E."/>
            <person name="Sugiura K."/>
            <person name="Sultana R."/>
            <person name="Takenaka Y."/>
            <person name="Taki K."/>
            <person name="Tammoja K."/>
            <person name="Tan S.L."/>
            <person name="Tang S."/>
            <person name="Taylor M.S."/>
            <person name="Tegner J."/>
            <person name="Teichmann S.A."/>
            <person name="Ueda H.R."/>
            <person name="van Nimwegen E."/>
            <person name="Verardo R."/>
            <person name="Wei C.L."/>
            <person name="Yagi K."/>
            <person name="Yamanishi H."/>
            <person name="Zabarovsky E."/>
            <person name="Zhu S."/>
            <person name="Zimmer A."/>
            <person name="Hide W."/>
            <person name="Bult C."/>
            <person name="Grimmond S.M."/>
            <person name="Teasdale R.D."/>
            <person name="Liu E.T."/>
            <person name="Brusic V."/>
            <person name="Quackenbush J."/>
            <person name="Wahlestedt C."/>
            <person name="Mattick J.S."/>
            <person name="Hume D.A."/>
            <person name="Kai C."/>
            <person name="Sasaki D."/>
            <person name="Tomaru Y."/>
            <person name="Fukuda S."/>
            <person name="Kanamori-Katayama M."/>
            <person name="Suzuki M."/>
            <person name="Aoki J."/>
            <person name="Arakawa T."/>
            <person name="Iida J."/>
            <person name="Imamura K."/>
            <person name="Itoh M."/>
            <person name="Kato T."/>
            <person name="Kawaji H."/>
            <person name="Kawagashira N."/>
            <person name="Kawashima T."/>
            <person name="Kojima M."/>
            <person name="Kondo S."/>
            <person name="Konno H."/>
            <person name="Nakano K."/>
            <person name="Ninomiya N."/>
            <person name="Nishio T."/>
            <person name="Okada M."/>
            <person name="Plessy C."/>
            <person name="Shibata K."/>
            <person name="Shiraki T."/>
            <person name="Suzuki S."/>
            <person name="Tagami M."/>
            <person name="Waki K."/>
            <person name="Watahiki A."/>
            <person name="Okamura-Oho Y."/>
            <person name="Suzuki H."/>
            <person name="Kawai J."/>
            <person name="Hayashizaki Y."/>
        </authorList>
    </citation>
    <scope>NUCLEOTIDE SEQUENCE [LARGE SCALE MRNA]</scope>
    <source>
        <strain>C57BL/6J</strain>
        <tissue>Corpus striatum</tissue>
        <tissue>Spleen</tissue>
    </source>
</reference>
<reference key="2">
    <citation type="journal article" date="2004" name="Genome Res.">
        <title>The status, quality, and expansion of the NIH full-length cDNA project: the Mammalian Gene Collection (MGC).</title>
        <authorList>
            <consortium name="The MGC Project Team"/>
        </authorList>
    </citation>
    <scope>NUCLEOTIDE SEQUENCE [LARGE SCALE MRNA]</scope>
    <source>
        <strain>FVB/N-3</strain>
        <tissue>Mammary tumor</tissue>
    </source>
</reference>
<organism>
    <name type="scientific">Mus musculus</name>
    <name type="common">Mouse</name>
    <dbReference type="NCBI Taxonomy" id="10090"/>
    <lineage>
        <taxon>Eukaryota</taxon>
        <taxon>Metazoa</taxon>
        <taxon>Chordata</taxon>
        <taxon>Craniata</taxon>
        <taxon>Vertebrata</taxon>
        <taxon>Euteleostomi</taxon>
        <taxon>Mammalia</taxon>
        <taxon>Eutheria</taxon>
        <taxon>Euarchontoglires</taxon>
        <taxon>Glires</taxon>
        <taxon>Rodentia</taxon>
        <taxon>Myomorpha</taxon>
        <taxon>Muroidea</taxon>
        <taxon>Muridae</taxon>
        <taxon>Murinae</taxon>
        <taxon>Mus</taxon>
        <taxon>Mus</taxon>
    </lineage>
</organism>
<feature type="chain" id="PRO_0000240869" description="Protein YIPF1">
    <location>
        <begin position="1"/>
        <end position="306"/>
    </location>
</feature>
<feature type="topological domain" description="Cytoplasmic" evidence="1">
    <location>
        <begin position="1"/>
        <end position="119"/>
    </location>
</feature>
<feature type="transmembrane region" description="Helical" evidence="2">
    <location>
        <begin position="120"/>
        <end position="140"/>
    </location>
</feature>
<feature type="topological domain" description="Lumenal" evidence="4">
    <location>
        <begin position="141"/>
        <end position="162"/>
    </location>
</feature>
<feature type="transmembrane region" description="Helical" evidence="2">
    <location>
        <begin position="163"/>
        <end position="183"/>
    </location>
</feature>
<feature type="topological domain" description="Cytoplasmic" evidence="4">
    <location>
        <begin position="184"/>
        <end position="200"/>
    </location>
</feature>
<feature type="transmembrane region" description="Helical" evidence="2">
    <location>
        <begin position="201"/>
        <end position="221"/>
    </location>
</feature>
<feature type="topological domain" description="Lumenal" evidence="4">
    <location>
        <begin position="222"/>
        <end position="227"/>
    </location>
</feature>
<feature type="transmembrane region" description="Helical" evidence="2">
    <location>
        <begin position="228"/>
        <end position="248"/>
    </location>
</feature>
<feature type="topological domain" description="Cytoplasmic" evidence="4">
    <location>
        <begin position="249"/>
        <end position="256"/>
    </location>
</feature>
<feature type="transmembrane region" description="Helical" evidence="2">
    <location>
        <begin position="257"/>
        <end position="277"/>
    </location>
</feature>
<feature type="topological domain" description="Lumenal" evidence="1">
    <location>
        <begin position="278"/>
        <end position="306"/>
    </location>
</feature>
<feature type="region of interest" description="Disordered" evidence="3">
    <location>
        <begin position="30"/>
        <end position="63"/>
    </location>
</feature>
<feature type="compositionally biased region" description="Acidic residues" evidence="3">
    <location>
        <begin position="50"/>
        <end position="63"/>
    </location>
</feature>
<feature type="glycosylation site" description="N-linked (GlcNAc...) asparagine" evidence="2">
    <location>
        <position position="297"/>
    </location>
</feature>
<feature type="sequence conflict" description="In Ref. 1; BAE34116." evidence="4" ref="1">
    <original>L</original>
    <variation>F</variation>
    <location>
        <position position="120"/>
    </location>
</feature>
<keyword id="KW-0967">Endosome</keyword>
<keyword id="KW-0325">Glycoprotein</keyword>
<keyword id="KW-0333">Golgi apparatus</keyword>
<keyword id="KW-0472">Membrane</keyword>
<keyword id="KW-1185">Reference proteome</keyword>
<keyword id="KW-0812">Transmembrane</keyword>
<keyword id="KW-1133">Transmembrane helix</keyword>
<sequence length="306" mass="34258">MAAVDDLQFEEFGDGATLLAANPDATTINIEDPSVSFGHQPRPPGSVGREEDEELLGNNDSDETELLAGQKRSSPFWTFEYYQTFFDVDTYQVFDRIKGSLLPVPGKNFVRLYIRSNPDLYGPFWICATLVFAIAISGNLSNFLIHLGEKTYHYVPEFQKVSIAATVIYAYAWLVPLALWGFLLWRNSKVMSMVSYSFLEIVCVYGYSLFIYIPTAVLWIIPQRVVRWVLVMIALGVSGSVLVMTFWPAVREDNRRVALATIVTIVLLHVLLSVGCLAYFFDAPEMDHLPAAITTPNQTVTAAKSS</sequence>
<proteinExistence type="evidence at transcript level"/>
<protein>
    <recommendedName>
        <fullName>Protein YIPF1</fullName>
    </recommendedName>
    <alternativeName>
        <fullName>YIP1 family member 1</fullName>
    </alternativeName>
</protein>
<accession>Q91VU1</accession>
<accession>Q3TZU1</accession>
<dbReference type="EMBL" id="AK081205">
    <property type="protein sequence ID" value="BAC38163.1"/>
    <property type="molecule type" value="mRNA"/>
</dbReference>
<dbReference type="EMBL" id="AK157536">
    <property type="protein sequence ID" value="BAE34116.1"/>
    <property type="molecule type" value="mRNA"/>
</dbReference>
<dbReference type="EMBL" id="BC009080">
    <property type="protein sequence ID" value="AAH09080.1"/>
    <property type="molecule type" value="mRNA"/>
</dbReference>
<dbReference type="CCDS" id="CCDS18437.1"/>
<dbReference type="RefSeq" id="NP_663525.1">
    <property type="nucleotide sequence ID" value="NM_145550.3"/>
</dbReference>
<dbReference type="RefSeq" id="XP_036019914.1">
    <property type="nucleotide sequence ID" value="XM_036164021.1"/>
</dbReference>
<dbReference type="SMR" id="Q91VU1"/>
<dbReference type="BioGRID" id="230974">
    <property type="interactions" value="1"/>
</dbReference>
<dbReference type="FunCoup" id="Q91VU1">
    <property type="interactions" value="2286"/>
</dbReference>
<dbReference type="STRING" id="10090.ENSMUSP00000075113"/>
<dbReference type="GlyCosmos" id="Q91VU1">
    <property type="glycosylation" value="1 site, No reported glycans"/>
</dbReference>
<dbReference type="GlyGen" id="Q91VU1">
    <property type="glycosylation" value="1 site"/>
</dbReference>
<dbReference type="iPTMnet" id="Q91VU1"/>
<dbReference type="PhosphoSitePlus" id="Q91VU1"/>
<dbReference type="PaxDb" id="10090-ENSMUSP00000075113"/>
<dbReference type="ProteomicsDB" id="299621"/>
<dbReference type="Antibodypedia" id="3081">
    <property type="antibodies" value="91 antibodies from 18 providers"/>
</dbReference>
<dbReference type="DNASU" id="230584"/>
<dbReference type="Ensembl" id="ENSMUST00000075693.12">
    <property type="protein sequence ID" value="ENSMUSP00000075113.6"/>
    <property type="gene ID" value="ENSMUSG00000057375.14"/>
</dbReference>
<dbReference type="GeneID" id="230584"/>
<dbReference type="KEGG" id="mmu:230584"/>
<dbReference type="UCSC" id="uc008tzs.2">
    <property type="organism name" value="mouse"/>
</dbReference>
<dbReference type="AGR" id="MGI:1915532"/>
<dbReference type="CTD" id="54432"/>
<dbReference type="MGI" id="MGI:1915532">
    <property type="gene designation" value="Yipf1"/>
</dbReference>
<dbReference type="VEuPathDB" id="HostDB:ENSMUSG00000057375"/>
<dbReference type="eggNOG" id="KOG3114">
    <property type="taxonomic scope" value="Eukaryota"/>
</dbReference>
<dbReference type="GeneTree" id="ENSGT00390000010157"/>
<dbReference type="HOGENOM" id="CLU_059606_1_0_1"/>
<dbReference type="InParanoid" id="Q91VU1"/>
<dbReference type="OMA" id="VFRRCVA"/>
<dbReference type="OrthoDB" id="10256463at2759"/>
<dbReference type="PhylomeDB" id="Q91VU1"/>
<dbReference type="TreeFam" id="TF313536"/>
<dbReference type="BioGRID-ORCS" id="230584">
    <property type="hits" value="3 hits in 78 CRISPR screens"/>
</dbReference>
<dbReference type="ChiTaRS" id="Yipf1">
    <property type="organism name" value="mouse"/>
</dbReference>
<dbReference type="PRO" id="PR:Q91VU1"/>
<dbReference type="Proteomes" id="UP000000589">
    <property type="component" value="Chromosome 4"/>
</dbReference>
<dbReference type="RNAct" id="Q91VU1">
    <property type="molecule type" value="protein"/>
</dbReference>
<dbReference type="Bgee" id="ENSMUSG00000057375">
    <property type="expression patterns" value="Expressed in choroid plexus of fourth ventricle and 261 other cell types or tissues"/>
</dbReference>
<dbReference type="ExpressionAtlas" id="Q91VU1">
    <property type="expression patterns" value="baseline and differential"/>
</dbReference>
<dbReference type="GO" id="GO:0005797">
    <property type="term" value="C:Golgi medial cisterna"/>
    <property type="evidence" value="ECO:0000250"/>
    <property type="project" value="UniProtKB"/>
</dbReference>
<dbReference type="GO" id="GO:0000138">
    <property type="term" value="C:Golgi trans cisterna"/>
    <property type="evidence" value="ECO:0000250"/>
    <property type="project" value="UniProtKB"/>
</dbReference>
<dbReference type="GO" id="GO:0031902">
    <property type="term" value="C:late endosome membrane"/>
    <property type="evidence" value="ECO:0007669"/>
    <property type="project" value="UniProtKB-SubCell"/>
</dbReference>
<dbReference type="GO" id="GO:0005654">
    <property type="term" value="C:nucleoplasm"/>
    <property type="evidence" value="ECO:0007669"/>
    <property type="project" value="Ensembl"/>
</dbReference>
<dbReference type="GO" id="GO:0005886">
    <property type="term" value="C:plasma membrane"/>
    <property type="evidence" value="ECO:0007669"/>
    <property type="project" value="Ensembl"/>
</dbReference>
<dbReference type="GO" id="GO:0005802">
    <property type="term" value="C:trans-Golgi network"/>
    <property type="evidence" value="ECO:0000250"/>
    <property type="project" value="UniProtKB"/>
</dbReference>
<dbReference type="GO" id="GO:0030133">
    <property type="term" value="C:transport vesicle"/>
    <property type="evidence" value="ECO:0007669"/>
    <property type="project" value="Ensembl"/>
</dbReference>
<dbReference type="GO" id="GO:0031267">
    <property type="term" value="F:small GTPase binding"/>
    <property type="evidence" value="ECO:0007669"/>
    <property type="project" value="InterPro"/>
</dbReference>
<dbReference type="GO" id="GO:0016192">
    <property type="term" value="P:vesicle-mediated transport"/>
    <property type="evidence" value="ECO:0007669"/>
    <property type="project" value="InterPro"/>
</dbReference>
<dbReference type="InterPro" id="IPR006977">
    <property type="entry name" value="Yip1_dom"/>
</dbReference>
<dbReference type="InterPro" id="IPR039765">
    <property type="entry name" value="Yip5/YIPF1/YIPF2"/>
</dbReference>
<dbReference type="PANTHER" id="PTHR12822">
    <property type="entry name" value="PROTEIN YIPF"/>
    <property type="match status" value="1"/>
</dbReference>
<dbReference type="PANTHER" id="PTHR12822:SF4">
    <property type="entry name" value="PROTEIN YIPF1"/>
    <property type="match status" value="1"/>
</dbReference>
<dbReference type="Pfam" id="PF04893">
    <property type="entry name" value="Yip1"/>
    <property type="match status" value="1"/>
</dbReference>
<evidence type="ECO:0000250" key="1">
    <source>
        <dbReference type="UniProtKB" id="Q9Y548"/>
    </source>
</evidence>
<evidence type="ECO:0000255" key="2"/>
<evidence type="ECO:0000256" key="3">
    <source>
        <dbReference type="SAM" id="MobiDB-lite"/>
    </source>
</evidence>
<evidence type="ECO:0000305" key="4"/>